<keyword id="KW-0021">Allosteric enzyme</keyword>
<keyword id="KW-0067">ATP-binding</keyword>
<keyword id="KW-0963">Cytoplasm</keyword>
<keyword id="KW-0418">Kinase</keyword>
<keyword id="KW-0547">Nucleotide-binding</keyword>
<keyword id="KW-0665">Pyrimidine biosynthesis</keyword>
<keyword id="KW-1185">Reference proteome</keyword>
<keyword id="KW-0808">Transferase</keyword>
<evidence type="ECO:0000255" key="1">
    <source>
        <dbReference type="HAMAP-Rule" id="MF_01220"/>
    </source>
</evidence>
<reference key="1">
    <citation type="submission" date="2003-10" db="EMBL/GenBank/DDBJ databases">
        <title>The complete genome sequence of the alkaliphilic Bacillus clausii KSM-K16.</title>
        <authorList>
            <person name="Takaki Y."/>
            <person name="Kageyama Y."/>
            <person name="Shimamura S."/>
            <person name="Suzuki H."/>
            <person name="Nishi S."/>
            <person name="Hatada Y."/>
            <person name="Kawai S."/>
            <person name="Ito S."/>
            <person name="Horikoshi K."/>
        </authorList>
    </citation>
    <scope>NUCLEOTIDE SEQUENCE [LARGE SCALE GENOMIC DNA]</scope>
    <source>
        <strain>KSM-K16</strain>
    </source>
</reference>
<comment type="function">
    <text evidence="1">Catalyzes the reversible phosphorylation of UMP to UDP.</text>
</comment>
<comment type="catalytic activity">
    <reaction evidence="1">
        <text>UMP + ATP = UDP + ADP</text>
        <dbReference type="Rhea" id="RHEA:24400"/>
        <dbReference type="ChEBI" id="CHEBI:30616"/>
        <dbReference type="ChEBI" id="CHEBI:57865"/>
        <dbReference type="ChEBI" id="CHEBI:58223"/>
        <dbReference type="ChEBI" id="CHEBI:456216"/>
        <dbReference type="EC" id="2.7.4.22"/>
    </reaction>
</comment>
<comment type="activity regulation">
    <text evidence="1">Allosterically activated by GTP. Inhibited by UTP.</text>
</comment>
<comment type="pathway">
    <text evidence="1">Pyrimidine metabolism; CTP biosynthesis via de novo pathway; UDP from UMP (UMPK route): step 1/1.</text>
</comment>
<comment type="subunit">
    <text evidence="1">Homohexamer.</text>
</comment>
<comment type="subcellular location">
    <subcellularLocation>
        <location evidence="1">Cytoplasm</location>
    </subcellularLocation>
</comment>
<comment type="similarity">
    <text evidence="1">Belongs to the UMP kinase family.</text>
</comment>
<name>PYRH_SHOC1</name>
<organism>
    <name type="scientific">Shouchella clausii (strain KSM-K16)</name>
    <name type="common">Alkalihalobacillus clausii</name>
    <dbReference type="NCBI Taxonomy" id="66692"/>
    <lineage>
        <taxon>Bacteria</taxon>
        <taxon>Bacillati</taxon>
        <taxon>Bacillota</taxon>
        <taxon>Bacilli</taxon>
        <taxon>Bacillales</taxon>
        <taxon>Bacillaceae</taxon>
        <taxon>Shouchella</taxon>
    </lineage>
</organism>
<proteinExistence type="inferred from homology"/>
<accession>Q5WFT0</accession>
<sequence>MYNRVVLKLSGEALAGEQGYGIDPTVIQSIAKQIKEITELNIEVAVVVGAGNIWRGMAGSAQGMDRATADYMGMLATVMNSLALQDSLEAIGVESRVQTSIEMRQVAEPYIRRKAIRHLQKKRVVIFAAGTGNPYFSTDTTAALRAAEIEAEVILMAKNNVDGVYNADPRVDDKAQKFDTITYMDVLKDGLQVMDSTASSLCMDNDIPLIVFSIMEEGNIKRAVLGEKIGTTVRGK</sequence>
<gene>
    <name evidence="1" type="primary">pyrH</name>
    <name type="synonym">smbA</name>
    <name type="ordered locus">ABC2240</name>
</gene>
<protein>
    <recommendedName>
        <fullName evidence="1">Uridylate kinase</fullName>
        <shortName evidence="1">UK</shortName>
        <ecNumber evidence="1">2.7.4.22</ecNumber>
    </recommendedName>
    <alternativeName>
        <fullName evidence="1">Uridine monophosphate kinase</fullName>
        <shortName evidence="1">UMP kinase</shortName>
        <shortName evidence="1">UMPK</shortName>
    </alternativeName>
</protein>
<dbReference type="EC" id="2.7.4.22" evidence="1"/>
<dbReference type="EMBL" id="AP006627">
    <property type="protein sequence ID" value="BAD64775.1"/>
    <property type="molecule type" value="Genomic_DNA"/>
</dbReference>
<dbReference type="SMR" id="Q5WFT0"/>
<dbReference type="STRING" id="66692.ABC2240"/>
<dbReference type="KEGG" id="bcl:ABC2240"/>
<dbReference type="eggNOG" id="COG0528">
    <property type="taxonomic scope" value="Bacteria"/>
</dbReference>
<dbReference type="HOGENOM" id="CLU_033861_0_0_9"/>
<dbReference type="UniPathway" id="UPA00159">
    <property type="reaction ID" value="UER00275"/>
</dbReference>
<dbReference type="Proteomes" id="UP000001168">
    <property type="component" value="Chromosome"/>
</dbReference>
<dbReference type="GO" id="GO:0005737">
    <property type="term" value="C:cytoplasm"/>
    <property type="evidence" value="ECO:0007669"/>
    <property type="project" value="UniProtKB-SubCell"/>
</dbReference>
<dbReference type="GO" id="GO:0005524">
    <property type="term" value="F:ATP binding"/>
    <property type="evidence" value="ECO:0007669"/>
    <property type="project" value="UniProtKB-KW"/>
</dbReference>
<dbReference type="GO" id="GO:0033862">
    <property type="term" value="F:UMP kinase activity"/>
    <property type="evidence" value="ECO:0007669"/>
    <property type="project" value="UniProtKB-EC"/>
</dbReference>
<dbReference type="GO" id="GO:0044210">
    <property type="term" value="P:'de novo' CTP biosynthetic process"/>
    <property type="evidence" value="ECO:0007669"/>
    <property type="project" value="UniProtKB-UniRule"/>
</dbReference>
<dbReference type="GO" id="GO:0006225">
    <property type="term" value="P:UDP biosynthetic process"/>
    <property type="evidence" value="ECO:0007669"/>
    <property type="project" value="TreeGrafter"/>
</dbReference>
<dbReference type="CDD" id="cd04254">
    <property type="entry name" value="AAK_UMPK-PyrH-Ec"/>
    <property type="match status" value="1"/>
</dbReference>
<dbReference type="FunFam" id="3.40.1160.10:FF:000001">
    <property type="entry name" value="Uridylate kinase"/>
    <property type="match status" value="1"/>
</dbReference>
<dbReference type="Gene3D" id="3.40.1160.10">
    <property type="entry name" value="Acetylglutamate kinase-like"/>
    <property type="match status" value="1"/>
</dbReference>
<dbReference type="HAMAP" id="MF_01220_B">
    <property type="entry name" value="PyrH_B"/>
    <property type="match status" value="1"/>
</dbReference>
<dbReference type="InterPro" id="IPR036393">
    <property type="entry name" value="AceGlu_kinase-like_sf"/>
</dbReference>
<dbReference type="InterPro" id="IPR001048">
    <property type="entry name" value="Asp/Glu/Uridylate_kinase"/>
</dbReference>
<dbReference type="InterPro" id="IPR011817">
    <property type="entry name" value="Uridylate_kinase"/>
</dbReference>
<dbReference type="InterPro" id="IPR015963">
    <property type="entry name" value="Uridylate_kinase_bac"/>
</dbReference>
<dbReference type="NCBIfam" id="TIGR02075">
    <property type="entry name" value="pyrH_bact"/>
    <property type="match status" value="1"/>
</dbReference>
<dbReference type="PANTHER" id="PTHR42833">
    <property type="entry name" value="URIDYLATE KINASE"/>
    <property type="match status" value="1"/>
</dbReference>
<dbReference type="PANTHER" id="PTHR42833:SF4">
    <property type="entry name" value="URIDYLATE KINASE PUMPKIN, CHLOROPLASTIC"/>
    <property type="match status" value="1"/>
</dbReference>
<dbReference type="Pfam" id="PF00696">
    <property type="entry name" value="AA_kinase"/>
    <property type="match status" value="1"/>
</dbReference>
<dbReference type="PIRSF" id="PIRSF005650">
    <property type="entry name" value="Uridylate_kin"/>
    <property type="match status" value="1"/>
</dbReference>
<dbReference type="SUPFAM" id="SSF53633">
    <property type="entry name" value="Carbamate kinase-like"/>
    <property type="match status" value="1"/>
</dbReference>
<feature type="chain" id="PRO_0000323791" description="Uridylate kinase">
    <location>
        <begin position="1"/>
        <end position="236"/>
    </location>
</feature>
<feature type="region of interest" description="Involved in allosteric activation by GTP" evidence="1">
    <location>
        <begin position="16"/>
        <end position="21"/>
    </location>
</feature>
<feature type="binding site" evidence="1">
    <location>
        <begin position="8"/>
        <end position="11"/>
    </location>
    <ligand>
        <name>ATP</name>
        <dbReference type="ChEBI" id="CHEBI:30616"/>
    </ligand>
</feature>
<feature type="binding site" evidence="1">
    <location>
        <position position="51"/>
    </location>
    <ligand>
        <name>ATP</name>
        <dbReference type="ChEBI" id="CHEBI:30616"/>
    </ligand>
</feature>
<feature type="binding site" evidence="1">
    <location>
        <position position="55"/>
    </location>
    <ligand>
        <name>ATP</name>
        <dbReference type="ChEBI" id="CHEBI:30616"/>
    </ligand>
</feature>
<feature type="binding site" evidence="1">
    <location>
        <position position="70"/>
    </location>
    <ligand>
        <name>UMP</name>
        <dbReference type="ChEBI" id="CHEBI:57865"/>
    </ligand>
</feature>
<feature type="binding site" evidence="1">
    <location>
        <begin position="131"/>
        <end position="138"/>
    </location>
    <ligand>
        <name>UMP</name>
        <dbReference type="ChEBI" id="CHEBI:57865"/>
    </ligand>
</feature>
<feature type="binding site" evidence="1">
    <location>
        <position position="159"/>
    </location>
    <ligand>
        <name>ATP</name>
        <dbReference type="ChEBI" id="CHEBI:30616"/>
    </ligand>
</feature>
<feature type="binding site" evidence="1">
    <location>
        <position position="165"/>
    </location>
    <ligand>
        <name>ATP</name>
        <dbReference type="ChEBI" id="CHEBI:30616"/>
    </ligand>
</feature>
<feature type="binding site" evidence="1">
    <location>
        <position position="168"/>
    </location>
    <ligand>
        <name>ATP</name>
        <dbReference type="ChEBI" id="CHEBI:30616"/>
    </ligand>
</feature>